<protein>
    <recommendedName>
        <fullName evidence="1">5-oxoprolinase subunit A</fullName>
        <shortName evidence="1">5-OPase subunit A</shortName>
        <ecNumber evidence="1">3.5.2.9</ecNumber>
    </recommendedName>
    <alternativeName>
        <fullName evidence="1">5-oxoprolinase (ATP-hydrolyzing) subunit A</fullName>
    </alternativeName>
</protein>
<comment type="function">
    <text evidence="1">Catalyzes the cleavage of 5-oxoproline to form L-glutamate coupled to the hydrolysis of ATP to ADP and inorganic phosphate.</text>
</comment>
<comment type="catalytic activity">
    <reaction evidence="1">
        <text>5-oxo-L-proline + ATP + 2 H2O = L-glutamate + ADP + phosphate + H(+)</text>
        <dbReference type="Rhea" id="RHEA:10348"/>
        <dbReference type="ChEBI" id="CHEBI:15377"/>
        <dbReference type="ChEBI" id="CHEBI:15378"/>
        <dbReference type="ChEBI" id="CHEBI:29985"/>
        <dbReference type="ChEBI" id="CHEBI:30616"/>
        <dbReference type="ChEBI" id="CHEBI:43474"/>
        <dbReference type="ChEBI" id="CHEBI:58402"/>
        <dbReference type="ChEBI" id="CHEBI:456216"/>
        <dbReference type="EC" id="3.5.2.9"/>
    </reaction>
</comment>
<comment type="subunit">
    <text evidence="1">Forms a complex composed of PxpA, PxpB and PxpC.</text>
</comment>
<comment type="similarity">
    <text evidence="1">Belongs to the LamB/PxpA family.</text>
</comment>
<feature type="chain" id="PRO_1000045204" description="5-oxoprolinase subunit A">
    <location>
        <begin position="1"/>
        <end position="244"/>
    </location>
</feature>
<name>PXPA_ECOUT</name>
<accession>Q1REL0</accession>
<proteinExistence type="inferred from homology"/>
<gene>
    <name evidence="1" type="primary">pxpA</name>
    <name type="ordered locus">UTI89_C0711</name>
</gene>
<sequence>MKIDLNADLGEGCASDAELLTLVSSANIACGFHAGDAQTMQACVREAIKNGVAIGAHPSFPDRENFGRSAMQLPPETVFAQTLYQIGALAAITRAQGGVMCHVKPHGMLYNQAAKEAQLADAIARAVYACDPALILVGLAGSELIRAGERYGLVTREEVFADRGYQADGSLVPRSQPGALIENEEQALAQTLEMVQYGRVKSITGEWAMVTAQTVCLHGDGEHALAFARRLRATFAEKGIVVAA</sequence>
<evidence type="ECO:0000255" key="1">
    <source>
        <dbReference type="HAMAP-Rule" id="MF_00691"/>
    </source>
</evidence>
<keyword id="KW-0067">ATP-binding</keyword>
<keyword id="KW-0378">Hydrolase</keyword>
<keyword id="KW-0547">Nucleotide-binding</keyword>
<dbReference type="EC" id="3.5.2.9" evidence="1"/>
<dbReference type="EMBL" id="CP000243">
    <property type="protein sequence ID" value="ABE06204.1"/>
    <property type="molecule type" value="Genomic_DNA"/>
</dbReference>
<dbReference type="RefSeq" id="WP_000687123.1">
    <property type="nucleotide sequence ID" value="NZ_CP064825.1"/>
</dbReference>
<dbReference type="SMR" id="Q1REL0"/>
<dbReference type="KEGG" id="eci:UTI89_C0711"/>
<dbReference type="HOGENOM" id="CLU_069535_0_0_6"/>
<dbReference type="Proteomes" id="UP000001952">
    <property type="component" value="Chromosome"/>
</dbReference>
<dbReference type="GO" id="GO:0017168">
    <property type="term" value="F:5-oxoprolinase (ATP-hydrolyzing) activity"/>
    <property type="evidence" value="ECO:0007669"/>
    <property type="project" value="UniProtKB-UniRule"/>
</dbReference>
<dbReference type="GO" id="GO:0005524">
    <property type="term" value="F:ATP binding"/>
    <property type="evidence" value="ECO:0007669"/>
    <property type="project" value="UniProtKB-UniRule"/>
</dbReference>
<dbReference type="GO" id="GO:0005975">
    <property type="term" value="P:carbohydrate metabolic process"/>
    <property type="evidence" value="ECO:0007669"/>
    <property type="project" value="InterPro"/>
</dbReference>
<dbReference type="CDD" id="cd10800">
    <property type="entry name" value="LamB_YcsF_YbgL_like"/>
    <property type="match status" value="1"/>
</dbReference>
<dbReference type="Gene3D" id="3.20.20.370">
    <property type="entry name" value="Glycoside hydrolase/deacetylase"/>
    <property type="match status" value="1"/>
</dbReference>
<dbReference type="HAMAP" id="MF_00691">
    <property type="entry name" value="PxpA"/>
    <property type="match status" value="1"/>
</dbReference>
<dbReference type="InterPro" id="IPR011330">
    <property type="entry name" value="Glyco_hydro/deAcase_b/a-brl"/>
</dbReference>
<dbReference type="InterPro" id="IPR005501">
    <property type="entry name" value="LamB/YcsF/PxpA-like"/>
</dbReference>
<dbReference type="NCBIfam" id="NF003812">
    <property type="entry name" value="PRK05406.1-1"/>
    <property type="match status" value="1"/>
</dbReference>
<dbReference type="NCBIfam" id="NF003814">
    <property type="entry name" value="PRK05406.1-3"/>
    <property type="match status" value="1"/>
</dbReference>
<dbReference type="NCBIfam" id="NF003815">
    <property type="entry name" value="PRK05406.1-4"/>
    <property type="match status" value="1"/>
</dbReference>
<dbReference type="NCBIfam" id="NF003816">
    <property type="entry name" value="PRK05406.1-5"/>
    <property type="match status" value="1"/>
</dbReference>
<dbReference type="PANTHER" id="PTHR30292:SF0">
    <property type="entry name" value="5-OXOPROLINASE SUBUNIT A"/>
    <property type="match status" value="1"/>
</dbReference>
<dbReference type="PANTHER" id="PTHR30292">
    <property type="entry name" value="UNCHARACTERIZED PROTEIN YBGL-RELATED"/>
    <property type="match status" value="1"/>
</dbReference>
<dbReference type="Pfam" id="PF03746">
    <property type="entry name" value="LamB_YcsF"/>
    <property type="match status" value="1"/>
</dbReference>
<dbReference type="SUPFAM" id="SSF88713">
    <property type="entry name" value="Glycoside hydrolase/deacetylase"/>
    <property type="match status" value="1"/>
</dbReference>
<reference key="1">
    <citation type="journal article" date="2006" name="Proc. Natl. Acad. Sci. U.S.A.">
        <title>Identification of genes subject to positive selection in uropathogenic strains of Escherichia coli: a comparative genomics approach.</title>
        <authorList>
            <person name="Chen S.L."/>
            <person name="Hung C.-S."/>
            <person name="Xu J."/>
            <person name="Reigstad C.S."/>
            <person name="Magrini V."/>
            <person name="Sabo A."/>
            <person name="Blasiar D."/>
            <person name="Bieri T."/>
            <person name="Meyer R.R."/>
            <person name="Ozersky P."/>
            <person name="Armstrong J.R."/>
            <person name="Fulton R.S."/>
            <person name="Latreille J.P."/>
            <person name="Spieth J."/>
            <person name="Hooton T.M."/>
            <person name="Mardis E.R."/>
            <person name="Hultgren S.J."/>
            <person name="Gordon J.I."/>
        </authorList>
    </citation>
    <scope>NUCLEOTIDE SEQUENCE [LARGE SCALE GENOMIC DNA]</scope>
    <source>
        <strain>UTI89 / UPEC</strain>
    </source>
</reference>
<organism>
    <name type="scientific">Escherichia coli (strain UTI89 / UPEC)</name>
    <dbReference type="NCBI Taxonomy" id="364106"/>
    <lineage>
        <taxon>Bacteria</taxon>
        <taxon>Pseudomonadati</taxon>
        <taxon>Pseudomonadota</taxon>
        <taxon>Gammaproteobacteria</taxon>
        <taxon>Enterobacterales</taxon>
        <taxon>Enterobacteriaceae</taxon>
        <taxon>Escherichia</taxon>
    </lineage>
</organism>